<accession>Q8NGF3</accession>
<accession>B9EIK4</accession>
<dbReference type="EMBL" id="AB065855">
    <property type="protein sequence ID" value="BAC06073.1"/>
    <property type="molecule type" value="Genomic_DNA"/>
</dbReference>
<dbReference type="EMBL" id="BC140717">
    <property type="protein sequence ID" value="AAI40718.1"/>
    <property type="molecule type" value="mRNA"/>
</dbReference>
<dbReference type="EMBL" id="BK004370">
    <property type="protein sequence ID" value="DAA04768.1"/>
    <property type="molecule type" value="Genomic_DNA"/>
</dbReference>
<dbReference type="CCDS" id="CCDS31357.1"/>
<dbReference type="RefSeq" id="NP_001004751.1">
    <property type="nucleotide sequence ID" value="NM_001004751.3"/>
</dbReference>
<dbReference type="SMR" id="Q8NGF3"/>
<dbReference type="FunCoup" id="Q8NGF3">
    <property type="interactions" value="757"/>
</dbReference>
<dbReference type="STRING" id="9606.ENSP00000492986"/>
<dbReference type="PhosphoSitePlus" id="Q8NGF3"/>
<dbReference type="BioMuta" id="OR51D1"/>
<dbReference type="DMDM" id="71153025"/>
<dbReference type="MassIVE" id="Q8NGF3"/>
<dbReference type="PaxDb" id="9606-ENSP00000350222"/>
<dbReference type="Antibodypedia" id="57488">
    <property type="antibodies" value="47 antibodies from 17 providers"/>
</dbReference>
<dbReference type="DNASU" id="390038"/>
<dbReference type="Ensembl" id="ENST00000357605.2">
    <property type="protein sequence ID" value="ENSP00000350222.2"/>
    <property type="gene ID" value="ENSG00000197428.3"/>
</dbReference>
<dbReference type="Ensembl" id="ENST00000641817.1">
    <property type="protein sequence ID" value="ENSP00000492986.1"/>
    <property type="gene ID" value="ENSG00000197428.3"/>
</dbReference>
<dbReference type="GeneID" id="390038"/>
<dbReference type="KEGG" id="hsa:390038"/>
<dbReference type="MANE-Select" id="ENST00000641817.1">
    <property type="protein sequence ID" value="ENSP00000492986.1"/>
    <property type="RefSeq nucleotide sequence ID" value="NM_001004751.3"/>
    <property type="RefSeq protein sequence ID" value="NP_001004751.1"/>
</dbReference>
<dbReference type="UCSC" id="uc010qyk.2">
    <property type="organism name" value="human"/>
</dbReference>
<dbReference type="AGR" id="HGNC:15193"/>
<dbReference type="CTD" id="390038"/>
<dbReference type="DisGeNET" id="390038"/>
<dbReference type="GeneCards" id="OR51D1"/>
<dbReference type="HGNC" id="HGNC:15193">
    <property type="gene designation" value="OR51D1"/>
</dbReference>
<dbReference type="HPA" id="ENSG00000197428">
    <property type="expression patterns" value="Not detected"/>
</dbReference>
<dbReference type="neXtProt" id="NX_Q8NGF3"/>
<dbReference type="PharmGKB" id="PA32370"/>
<dbReference type="VEuPathDB" id="HostDB:ENSG00000197428"/>
<dbReference type="eggNOG" id="ENOG502R2IG">
    <property type="taxonomic scope" value="Eukaryota"/>
</dbReference>
<dbReference type="GeneTree" id="ENSGT01130000278286"/>
<dbReference type="HOGENOM" id="CLU_012526_0_0_1"/>
<dbReference type="InParanoid" id="Q8NGF3"/>
<dbReference type="OMA" id="HMFSQGG"/>
<dbReference type="OrthoDB" id="9444602at2759"/>
<dbReference type="PAN-GO" id="Q8NGF3">
    <property type="GO annotations" value="2 GO annotations based on evolutionary models"/>
</dbReference>
<dbReference type="PhylomeDB" id="Q8NGF3"/>
<dbReference type="TreeFam" id="TF342735"/>
<dbReference type="PathwayCommons" id="Q8NGF3"/>
<dbReference type="Reactome" id="R-HSA-381753">
    <property type="pathway name" value="Olfactory Signaling Pathway"/>
</dbReference>
<dbReference type="Reactome" id="R-HSA-9752946">
    <property type="pathway name" value="Expression and translocation of olfactory receptors"/>
</dbReference>
<dbReference type="BioGRID-ORCS" id="390038">
    <property type="hits" value="13 hits in 750 CRISPR screens"/>
</dbReference>
<dbReference type="GeneWiki" id="OR51D1"/>
<dbReference type="GenomeRNAi" id="390038"/>
<dbReference type="Pharos" id="Q8NGF3">
    <property type="development level" value="Tdark"/>
</dbReference>
<dbReference type="PRO" id="PR:Q8NGF3"/>
<dbReference type="Proteomes" id="UP000005640">
    <property type="component" value="Chromosome 11"/>
</dbReference>
<dbReference type="RNAct" id="Q8NGF3">
    <property type="molecule type" value="protein"/>
</dbReference>
<dbReference type="Bgee" id="ENSG00000197428">
    <property type="expression patterns" value="Expressed in stromal cell of endometrium and 1 other cell type or tissue"/>
</dbReference>
<dbReference type="ExpressionAtlas" id="Q8NGF3">
    <property type="expression patterns" value="baseline and differential"/>
</dbReference>
<dbReference type="GO" id="GO:0005886">
    <property type="term" value="C:plasma membrane"/>
    <property type="evidence" value="ECO:0000318"/>
    <property type="project" value="GO_Central"/>
</dbReference>
<dbReference type="GO" id="GO:0004930">
    <property type="term" value="F:G protein-coupled receptor activity"/>
    <property type="evidence" value="ECO:0007669"/>
    <property type="project" value="UniProtKB-KW"/>
</dbReference>
<dbReference type="GO" id="GO:0004984">
    <property type="term" value="F:olfactory receptor activity"/>
    <property type="evidence" value="ECO:0000318"/>
    <property type="project" value="GO_Central"/>
</dbReference>
<dbReference type="CDD" id="cd15222">
    <property type="entry name" value="7tmA_OR51-like"/>
    <property type="match status" value="1"/>
</dbReference>
<dbReference type="FunFam" id="1.20.1070.10:FF:000002">
    <property type="entry name" value="Olfactory receptor"/>
    <property type="match status" value="1"/>
</dbReference>
<dbReference type="Gene3D" id="1.20.1070.10">
    <property type="entry name" value="Rhodopsin 7-helix transmembrane proteins"/>
    <property type="match status" value="1"/>
</dbReference>
<dbReference type="InterPro" id="IPR000276">
    <property type="entry name" value="GPCR_Rhodpsn"/>
</dbReference>
<dbReference type="InterPro" id="IPR017452">
    <property type="entry name" value="GPCR_Rhodpsn_7TM"/>
</dbReference>
<dbReference type="InterPro" id="IPR000725">
    <property type="entry name" value="Olfact_rcpt"/>
</dbReference>
<dbReference type="InterPro" id="IPR050402">
    <property type="entry name" value="OR51/52/56-like"/>
</dbReference>
<dbReference type="PANTHER" id="PTHR26450:SF166">
    <property type="entry name" value="OLFACTORY RECEPTOR 51D1"/>
    <property type="match status" value="1"/>
</dbReference>
<dbReference type="PANTHER" id="PTHR26450">
    <property type="entry name" value="OLFACTORY RECEPTOR 56B1-RELATED"/>
    <property type="match status" value="1"/>
</dbReference>
<dbReference type="Pfam" id="PF13853">
    <property type="entry name" value="7tm_4"/>
    <property type="match status" value="1"/>
</dbReference>
<dbReference type="PRINTS" id="PR00237">
    <property type="entry name" value="GPCRRHODOPSN"/>
</dbReference>
<dbReference type="PRINTS" id="PR00245">
    <property type="entry name" value="OLFACTORYR"/>
</dbReference>
<dbReference type="SUPFAM" id="SSF81321">
    <property type="entry name" value="Family A G protein-coupled receptor-like"/>
    <property type="match status" value="1"/>
</dbReference>
<dbReference type="PROSITE" id="PS00237">
    <property type="entry name" value="G_PROTEIN_RECEP_F1_1"/>
    <property type="match status" value="1"/>
</dbReference>
<dbReference type="PROSITE" id="PS50262">
    <property type="entry name" value="G_PROTEIN_RECEP_F1_2"/>
    <property type="match status" value="1"/>
</dbReference>
<reference key="1">
    <citation type="submission" date="2001-07" db="EMBL/GenBank/DDBJ databases">
        <title>Genome-wide discovery and analysis of human seven transmembrane helix receptor genes.</title>
        <authorList>
            <person name="Suwa M."/>
            <person name="Sato T."/>
            <person name="Okouchi I."/>
            <person name="Arita M."/>
            <person name="Futami K."/>
            <person name="Matsumoto S."/>
            <person name="Tsutsumi S."/>
            <person name="Aburatani H."/>
            <person name="Asai K."/>
            <person name="Akiyama Y."/>
        </authorList>
    </citation>
    <scope>NUCLEOTIDE SEQUENCE [GENOMIC DNA]</scope>
</reference>
<reference key="2">
    <citation type="journal article" date="2004" name="Genome Res.">
        <title>The status, quality, and expansion of the NIH full-length cDNA project: the Mammalian Gene Collection (MGC).</title>
        <authorList>
            <consortium name="The MGC Project Team"/>
        </authorList>
    </citation>
    <scope>NUCLEOTIDE SEQUENCE [LARGE SCALE MRNA]</scope>
    <scope>VARIANT VAL-89</scope>
</reference>
<reference key="3">
    <citation type="journal article" date="2004" name="Proc. Natl. Acad. Sci. U.S.A.">
        <title>The human olfactory receptor gene family.</title>
        <authorList>
            <person name="Malnic B."/>
            <person name="Godfrey P.A."/>
            <person name="Buck L.B."/>
        </authorList>
    </citation>
    <scope>IDENTIFICATION</scope>
</reference>
<reference key="4">
    <citation type="journal article" date="2004" name="Proc. Natl. Acad. Sci. U.S.A.">
        <authorList>
            <person name="Malnic B."/>
            <person name="Godfrey P.A."/>
            <person name="Buck L.B."/>
        </authorList>
    </citation>
    <scope>ERRATUM OF PUBMED:14983052</scope>
</reference>
<organism>
    <name type="scientific">Homo sapiens</name>
    <name type="common">Human</name>
    <dbReference type="NCBI Taxonomy" id="9606"/>
    <lineage>
        <taxon>Eukaryota</taxon>
        <taxon>Metazoa</taxon>
        <taxon>Chordata</taxon>
        <taxon>Craniata</taxon>
        <taxon>Vertebrata</taxon>
        <taxon>Euteleostomi</taxon>
        <taxon>Mammalia</taxon>
        <taxon>Eutheria</taxon>
        <taxon>Euarchontoglires</taxon>
        <taxon>Primates</taxon>
        <taxon>Haplorrhini</taxon>
        <taxon>Catarrhini</taxon>
        <taxon>Hominidae</taxon>
        <taxon>Homo</taxon>
    </lineage>
</organism>
<evidence type="ECO:0000255" key="1"/>
<evidence type="ECO:0000255" key="2">
    <source>
        <dbReference type="PROSITE-ProRule" id="PRU00521"/>
    </source>
</evidence>
<evidence type="ECO:0000269" key="3">
    <source>
    </source>
</evidence>
<evidence type="ECO:0000305" key="4"/>
<feature type="chain" id="PRO_0000150749" description="Olfactory receptor 51D1">
    <location>
        <begin position="1"/>
        <end position="324"/>
    </location>
</feature>
<feature type="topological domain" description="Extracellular" evidence="1">
    <location>
        <begin position="1"/>
        <end position="38"/>
    </location>
</feature>
<feature type="transmembrane region" description="Helical; Name=1" evidence="1">
    <location>
        <begin position="39"/>
        <end position="59"/>
    </location>
</feature>
<feature type="topological domain" description="Cytoplasmic" evidence="1">
    <location>
        <begin position="60"/>
        <end position="67"/>
    </location>
</feature>
<feature type="transmembrane region" description="Helical; Name=2" evidence="1">
    <location>
        <begin position="68"/>
        <end position="88"/>
    </location>
</feature>
<feature type="topological domain" description="Extracellular" evidence="1">
    <location>
        <begin position="89"/>
        <end position="112"/>
    </location>
</feature>
<feature type="transmembrane region" description="Helical; Name=3" evidence="1">
    <location>
        <begin position="113"/>
        <end position="133"/>
    </location>
</feature>
<feature type="topological domain" description="Cytoplasmic" evidence="1">
    <location>
        <begin position="134"/>
        <end position="152"/>
    </location>
</feature>
<feature type="transmembrane region" description="Helical; Name=4" evidence="1">
    <location>
        <begin position="153"/>
        <end position="173"/>
    </location>
</feature>
<feature type="topological domain" description="Extracellular" evidence="1">
    <location>
        <begin position="174"/>
        <end position="209"/>
    </location>
</feature>
<feature type="transmembrane region" description="Helical; Name=5" evidence="1">
    <location>
        <begin position="210"/>
        <end position="230"/>
    </location>
</feature>
<feature type="topological domain" description="Cytoplasmic" evidence="1">
    <location>
        <begin position="231"/>
        <end position="250"/>
    </location>
</feature>
<feature type="transmembrane region" description="Helical; Name=6" evidence="1">
    <location>
        <begin position="251"/>
        <end position="271"/>
    </location>
</feature>
<feature type="topological domain" description="Extracellular" evidence="1">
    <location>
        <begin position="272"/>
        <end position="285"/>
    </location>
</feature>
<feature type="transmembrane region" description="Helical; Name=7" evidence="1">
    <location>
        <begin position="286"/>
        <end position="306"/>
    </location>
</feature>
<feature type="topological domain" description="Cytoplasmic" evidence="1">
    <location>
        <begin position="307"/>
        <end position="324"/>
    </location>
</feature>
<feature type="disulfide bond" evidence="2">
    <location>
        <begin position="110"/>
        <end position="202"/>
    </location>
</feature>
<feature type="sequence variant" id="VAR_053323" description="In dbSNP:rs905871." evidence="3">
    <original>I</original>
    <variation>V</variation>
    <location>
        <position position="89"/>
    </location>
</feature>
<comment type="function">
    <text evidence="4">Odorant receptor.</text>
</comment>
<comment type="subcellular location">
    <subcellularLocation>
        <location>Cell membrane</location>
        <topology>Multi-pass membrane protein</topology>
    </subcellularLocation>
</comment>
<comment type="similarity">
    <text evidence="2">Belongs to the G-protein coupled receptor 1 family.</text>
</comment>
<comment type="online information" name="Human Olfactory Receptor Data Exploratorium (HORDE)">
    <link uri="http://genome.weizmann.ac.il/horde/card/index/symbol:OR51D1"/>
</comment>
<keyword id="KW-1003">Cell membrane</keyword>
<keyword id="KW-1015">Disulfide bond</keyword>
<keyword id="KW-0297">G-protein coupled receptor</keyword>
<keyword id="KW-0472">Membrane</keyword>
<keyword id="KW-0552">Olfaction</keyword>
<keyword id="KW-0675">Receptor</keyword>
<keyword id="KW-1185">Reference proteome</keyword>
<keyword id="KW-0716">Sensory transduction</keyword>
<keyword id="KW-0807">Transducer</keyword>
<keyword id="KW-0812">Transmembrane</keyword>
<keyword id="KW-1133">Transmembrane helix</keyword>
<gene>
    <name type="primary">OR51D1</name>
</gene>
<sequence length="324" mass="35839">MQKPQLLVPIIATSNGNLVHAAYFLLVGIPGLGPTIHFWLAFPLCFMYALATLGNLTIVLIIRVERRLHEPMYLFLAMLSTIDLVLSSITMPKMASLFLMGIQEIEFNICLAQMFLIHALSAVESAVLLAMAFDRFVAICHPLRHASVLTGCTVAKIGLSALTRGFVFFFPLPFILKWLSYCQTHTVTHSFCLHQDIMKLSCTDTRVNVVYGLFIILSVMGVDSLFIGFSYILILWAVLELSSRRAALKAFNTCISHLCAVLVFYVPLIGLSVVHRLGGPTSLLHVVMANTYLLLPPVVNPLVYGAKTKEICSRVLCMFSQGGK</sequence>
<name>O51D1_HUMAN</name>
<proteinExistence type="evidence at transcript level"/>
<protein>
    <recommendedName>
        <fullName>Olfactory receptor 51D1</fullName>
    </recommendedName>
    <alternativeName>
        <fullName>Olfactory receptor OR11-14</fullName>
    </alternativeName>
</protein>